<name>TRUB_FRATW</name>
<sequence length="302" mass="33958">MKKNRLNLNGVVVINKAKDISSNKVLQQLKYLFNAQKVGHTGTLDPMATGVLPICFGRATKIAQYLLDADKEYIATIRLGIETDSGDAEGEIIAKSINIPELSAEYLETVLAKFRGDVVQIPPMYSALKYNGQPLYKLAREGKTVEVKSRNIKIYELELLEFNIDSLKIRVKCSKGTYIRSLAIDIGKTLGCGGHLIALQRTQSGPFKLSEAFRLEQLKDLSFEQKIASITNIESVFIDKPIYSLLEEEKDDLYKRGLFADKPHLDGTVRIYDVEKFVAIAEFDKGKLINKKFFDQDILISE</sequence>
<protein>
    <recommendedName>
        <fullName evidence="1">tRNA pseudouridine synthase B</fullName>
        <ecNumber evidence="1">5.4.99.25</ecNumber>
    </recommendedName>
    <alternativeName>
        <fullName evidence="1">tRNA pseudouridine(55) synthase</fullName>
        <shortName evidence="1">Psi55 synthase</shortName>
    </alternativeName>
    <alternativeName>
        <fullName evidence="1">tRNA pseudouridylate synthase</fullName>
    </alternativeName>
    <alternativeName>
        <fullName evidence="1">tRNA-uridine isomerase</fullName>
    </alternativeName>
</protein>
<gene>
    <name evidence="1" type="primary">truB</name>
    <name type="ordered locus">FTW_0373</name>
</gene>
<comment type="function">
    <text evidence="1">Responsible for synthesis of pseudouridine from uracil-55 in the psi GC loop of transfer RNAs.</text>
</comment>
<comment type="catalytic activity">
    <reaction evidence="1">
        <text>uridine(55) in tRNA = pseudouridine(55) in tRNA</text>
        <dbReference type="Rhea" id="RHEA:42532"/>
        <dbReference type="Rhea" id="RHEA-COMP:10101"/>
        <dbReference type="Rhea" id="RHEA-COMP:10102"/>
        <dbReference type="ChEBI" id="CHEBI:65314"/>
        <dbReference type="ChEBI" id="CHEBI:65315"/>
        <dbReference type="EC" id="5.4.99.25"/>
    </reaction>
</comment>
<comment type="similarity">
    <text evidence="1">Belongs to the pseudouridine synthase TruB family. Type 1 subfamily.</text>
</comment>
<proteinExistence type="inferred from homology"/>
<reference key="1">
    <citation type="journal article" date="2007" name="PLoS ONE">
        <title>Complete genomic characterization of a pathogenic A.II strain of Francisella tularensis subspecies tularensis.</title>
        <authorList>
            <person name="Beckstrom-Sternberg S.M."/>
            <person name="Auerbach R.K."/>
            <person name="Godbole S."/>
            <person name="Pearson J.V."/>
            <person name="Beckstrom-Sternberg J.S."/>
            <person name="Deng Z."/>
            <person name="Munk C."/>
            <person name="Kubota K."/>
            <person name="Zhou Y."/>
            <person name="Bruce D."/>
            <person name="Noronha J."/>
            <person name="Scheuermann R.H."/>
            <person name="Wang A."/>
            <person name="Wei X."/>
            <person name="Wang J."/>
            <person name="Hao J."/>
            <person name="Wagner D.M."/>
            <person name="Brettin T.S."/>
            <person name="Brown N."/>
            <person name="Gilna P."/>
            <person name="Keim P.S."/>
        </authorList>
    </citation>
    <scope>NUCLEOTIDE SEQUENCE [LARGE SCALE GENOMIC DNA]</scope>
    <source>
        <strain>WY96-3418</strain>
    </source>
</reference>
<evidence type="ECO:0000255" key="1">
    <source>
        <dbReference type="HAMAP-Rule" id="MF_01080"/>
    </source>
</evidence>
<feature type="chain" id="PRO_1000084598" description="tRNA pseudouridine synthase B">
    <location>
        <begin position="1"/>
        <end position="302"/>
    </location>
</feature>
<feature type="active site" description="Nucleophile" evidence="1">
    <location>
        <position position="45"/>
    </location>
</feature>
<dbReference type="EC" id="5.4.99.25" evidence="1"/>
<dbReference type="EMBL" id="CP000608">
    <property type="protein sequence ID" value="ABO46312.1"/>
    <property type="molecule type" value="Genomic_DNA"/>
</dbReference>
<dbReference type="RefSeq" id="WP_003025098.1">
    <property type="nucleotide sequence ID" value="NC_009257.1"/>
</dbReference>
<dbReference type="SMR" id="A4IWL0"/>
<dbReference type="KEGG" id="ftw:FTW_0373"/>
<dbReference type="HOGENOM" id="CLU_032087_0_3_6"/>
<dbReference type="GO" id="GO:0003723">
    <property type="term" value="F:RNA binding"/>
    <property type="evidence" value="ECO:0007669"/>
    <property type="project" value="InterPro"/>
</dbReference>
<dbReference type="GO" id="GO:0160148">
    <property type="term" value="F:tRNA pseudouridine(55) synthase activity"/>
    <property type="evidence" value="ECO:0007669"/>
    <property type="project" value="UniProtKB-EC"/>
</dbReference>
<dbReference type="GO" id="GO:1990481">
    <property type="term" value="P:mRNA pseudouridine synthesis"/>
    <property type="evidence" value="ECO:0007669"/>
    <property type="project" value="TreeGrafter"/>
</dbReference>
<dbReference type="GO" id="GO:0031119">
    <property type="term" value="P:tRNA pseudouridine synthesis"/>
    <property type="evidence" value="ECO:0007669"/>
    <property type="project" value="UniProtKB-UniRule"/>
</dbReference>
<dbReference type="CDD" id="cd02573">
    <property type="entry name" value="PseudoU_synth_EcTruB"/>
    <property type="match status" value="1"/>
</dbReference>
<dbReference type="FunFam" id="3.30.2350.10:FF:000011">
    <property type="entry name" value="tRNA pseudouridine synthase B"/>
    <property type="match status" value="1"/>
</dbReference>
<dbReference type="Gene3D" id="3.30.2350.10">
    <property type="entry name" value="Pseudouridine synthase"/>
    <property type="match status" value="1"/>
</dbReference>
<dbReference type="HAMAP" id="MF_01080">
    <property type="entry name" value="TruB_bact"/>
    <property type="match status" value="1"/>
</dbReference>
<dbReference type="InterPro" id="IPR020103">
    <property type="entry name" value="PsdUridine_synth_cat_dom_sf"/>
</dbReference>
<dbReference type="InterPro" id="IPR002501">
    <property type="entry name" value="PsdUridine_synth_N"/>
</dbReference>
<dbReference type="InterPro" id="IPR014780">
    <property type="entry name" value="tRNA_psdUridine_synth_TruB"/>
</dbReference>
<dbReference type="InterPro" id="IPR032819">
    <property type="entry name" value="TruB_C"/>
</dbReference>
<dbReference type="NCBIfam" id="TIGR00431">
    <property type="entry name" value="TruB"/>
    <property type="match status" value="1"/>
</dbReference>
<dbReference type="PANTHER" id="PTHR13767:SF2">
    <property type="entry name" value="PSEUDOURIDYLATE SYNTHASE TRUB1"/>
    <property type="match status" value="1"/>
</dbReference>
<dbReference type="PANTHER" id="PTHR13767">
    <property type="entry name" value="TRNA-PSEUDOURIDINE SYNTHASE"/>
    <property type="match status" value="1"/>
</dbReference>
<dbReference type="Pfam" id="PF16198">
    <property type="entry name" value="TruB_C_2"/>
    <property type="match status" value="1"/>
</dbReference>
<dbReference type="Pfam" id="PF01509">
    <property type="entry name" value="TruB_N"/>
    <property type="match status" value="1"/>
</dbReference>
<dbReference type="SUPFAM" id="SSF55120">
    <property type="entry name" value="Pseudouridine synthase"/>
    <property type="match status" value="1"/>
</dbReference>
<keyword id="KW-0413">Isomerase</keyword>
<keyword id="KW-0819">tRNA processing</keyword>
<organism>
    <name type="scientific">Francisella tularensis subsp. tularensis (strain WY96-3418)</name>
    <dbReference type="NCBI Taxonomy" id="418136"/>
    <lineage>
        <taxon>Bacteria</taxon>
        <taxon>Pseudomonadati</taxon>
        <taxon>Pseudomonadota</taxon>
        <taxon>Gammaproteobacteria</taxon>
        <taxon>Thiotrichales</taxon>
        <taxon>Francisellaceae</taxon>
        <taxon>Francisella</taxon>
    </lineage>
</organism>
<accession>A4IWL0</accession>